<feature type="chain" id="PRO_0000387440" description="tRNA1(Val) (adenine(37)-N6)-methyltransferase">
    <location>
        <begin position="1"/>
        <end position="239"/>
    </location>
</feature>
<comment type="function">
    <text evidence="1">Specifically methylates the adenine in position 37 of tRNA(1)(Val) (anticodon cmo5UAC).</text>
</comment>
<comment type="catalytic activity">
    <reaction evidence="1">
        <text>adenosine(37) in tRNA1(Val) + S-adenosyl-L-methionine = N(6)-methyladenosine(37) in tRNA1(Val) + S-adenosyl-L-homocysteine + H(+)</text>
        <dbReference type="Rhea" id="RHEA:43160"/>
        <dbReference type="Rhea" id="RHEA-COMP:10369"/>
        <dbReference type="Rhea" id="RHEA-COMP:10370"/>
        <dbReference type="ChEBI" id="CHEBI:15378"/>
        <dbReference type="ChEBI" id="CHEBI:57856"/>
        <dbReference type="ChEBI" id="CHEBI:59789"/>
        <dbReference type="ChEBI" id="CHEBI:74411"/>
        <dbReference type="ChEBI" id="CHEBI:74449"/>
        <dbReference type="EC" id="2.1.1.223"/>
    </reaction>
</comment>
<comment type="subcellular location">
    <subcellularLocation>
        <location evidence="1">Cytoplasm</location>
    </subcellularLocation>
</comment>
<comment type="similarity">
    <text evidence="1">Belongs to the methyltransferase superfamily. tRNA (adenine-N(6)-)-methyltransferase family.</text>
</comment>
<dbReference type="EC" id="2.1.1.223" evidence="1"/>
<dbReference type="EMBL" id="CP000393">
    <property type="protein sequence ID" value="ABG49800.1"/>
    <property type="molecule type" value="Genomic_DNA"/>
</dbReference>
<dbReference type="RefSeq" id="WP_011610196.1">
    <property type="nucleotide sequence ID" value="NC_008312.1"/>
</dbReference>
<dbReference type="SMR" id="Q119M4"/>
<dbReference type="KEGG" id="ter:Tery_0325"/>
<dbReference type="eggNOG" id="COG4123">
    <property type="taxonomic scope" value="Bacteria"/>
</dbReference>
<dbReference type="HOGENOM" id="CLU_061983_0_0_3"/>
<dbReference type="OrthoDB" id="9777257at2"/>
<dbReference type="GO" id="GO:0005737">
    <property type="term" value="C:cytoplasm"/>
    <property type="evidence" value="ECO:0007669"/>
    <property type="project" value="UniProtKB-SubCell"/>
</dbReference>
<dbReference type="GO" id="GO:0003676">
    <property type="term" value="F:nucleic acid binding"/>
    <property type="evidence" value="ECO:0007669"/>
    <property type="project" value="InterPro"/>
</dbReference>
<dbReference type="GO" id="GO:0016430">
    <property type="term" value="F:tRNA (adenine-N6)-methyltransferase activity"/>
    <property type="evidence" value="ECO:0007669"/>
    <property type="project" value="UniProtKB-UniRule"/>
</dbReference>
<dbReference type="GO" id="GO:0032259">
    <property type="term" value="P:methylation"/>
    <property type="evidence" value="ECO:0007669"/>
    <property type="project" value="UniProtKB-KW"/>
</dbReference>
<dbReference type="GO" id="GO:0008033">
    <property type="term" value="P:tRNA processing"/>
    <property type="evidence" value="ECO:0007669"/>
    <property type="project" value="UniProtKB-UniRule"/>
</dbReference>
<dbReference type="CDD" id="cd02440">
    <property type="entry name" value="AdoMet_MTases"/>
    <property type="match status" value="1"/>
</dbReference>
<dbReference type="Gene3D" id="3.40.50.150">
    <property type="entry name" value="Vaccinia Virus protein VP39"/>
    <property type="match status" value="1"/>
</dbReference>
<dbReference type="HAMAP" id="MF_01872">
    <property type="entry name" value="tRNA_methyltr_YfiC"/>
    <property type="match status" value="1"/>
</dbReference>
<dbReference type="InterPro" id="IPR002052">
    <property type="entry name" value="DNA_methylase_N6_adenine_CS"/>
</dbReference>
<dbReference type="InterPro" id="IPR029063">
    <property type="entry name" value="SAM-dependent_MTases_sf"/>
</dbReference>
<dbReference type="InterPro" id="IPR007848">
    <property type="entry name" value="Small_mtfrase_dom"/>
</dbReference>
<dbReference type="InterPro" id="IPR050210">
    <property type="entry name" value="tRNA_Adenine-N(6)_MTase"/>
</dbReference>
<dbReference type="InterPro" id="IPR022882">
    <property type="entry name" value="tRNA_adenine-N6_MeTrfase"/>
</dbReference>
<dbReference type="PANTHER" id="PTHR47739">
    <property type="entry name" value="TRNA1(VAL) (ADENINE(37)-N6)-METHYLTRANSFERASE"/>
    <property type="match status" value="1"/>
</dbReference>
<dbReference type="PANTHER" id="PTHR47739:SF1">
    <property type="entry name" value="TRNA1(VAL) (ADENINE(37)-N6)-METHYLTRANSFERASE"/>
    <property type="match status" value="1"/>
</dbReference>
<dbReference type="Pfam" id="PF05175">
    <property type="entry name" value="MTS"/>
    <property type="match status" value="1"/>
</dbReference>
<dbReference type="PRINTS" id="PR00507">
    <property type="entry name" value="N12N6MTFRASE"/>
</dbReference>
<dbReference type="SUPFAM" id="SSF53335">
    <property type="entry name" value="S-adenosyl-L-methionine-dependent methyltransferases"/>
    <property type="match status" value="1"/>
</dbReference>
<dbReference type="PROSITE" id="PS00092">
    <property type="entry name" value="N6_MTASE"/>
    <property type="match status" value="1"/>
</dbReference>
<protein>
    <recommendedName>
        <fullName evidence="1">tRNA1(Val) (adenine(37)-N6)-methyltransferase</fullName>
        <ecNumber evidence="1">2.1.1.223</ecNumber>
    </recommendedName>
    <alternativeName>
        <fullName evidence="1">tRNA m6A37 methyltransferase</fullName>
    </alternativeName>
</protein>
<keyword id="KW-0963">Cytoplasm</keyword>
<keyword id="KW-0489">Methyltransferase</keyword>
<keyword id="KW-0949">S-adenosyl-L-methionine</keyword>
<keyword id="KW-0808">Transferase</keyword>
<keyword id="KW-0819">tRNA processing</keyword>
<organism>
    <name type="scientific">Trichodesmium erythraeum (strain IMS101)</name>
    <dbReference type="NCBI Taxonomy" id="203124"/>
    <lineage>
        <taxon>Bacteria</taxon>
        <taxon>Bacillati</taxon>
        <taxon>Cyanobacteriota</taxon>
        <taxon>Cyanophyceae</taxon>
        <taxon>Oscillatoriophycideae</taxon>
        <taxon>Oscillatoriales</taxon>
        <taxon>Microcoleaceae</taxon>
        <taxon>Trichodesmium</taxon>
    </lineage>
</organism>
<gene>
    <name type="ordered locus">Tery_0325</name>
</gene>
<evidence type="ECO:0000255" key="1">
    <source>
        <dbReference type="HAMAP-Rule" id="MF_01872"/>
    </source>
</evidence>
<proteinExistence type="inferred from homology"/>
<accession>Q119M4</accession>
<name>TRMN6_TRIEI</name>
<reference key="1">
    <citation type="journal article" date="2015" name="Proc. Natl. Acad. Sci. U.S.A.">
        <title>Trichodesmium genome maintains abundant, widespread noncoding DNA in situ, despite oligotrophic lifestyle.</title>
        <authorList>
            <person name="Walworth N."/>
            <person name="Pfreundt U."/>
            <person name="Nelson W.C."/>
            <person name="Mincer T."/>
            <person name="Heidelberg J.F."/>
            <person name="Fu F."/>
            <person name="Waterbury J.B."/>
            <person name="Glavina del Rio T."/>
            <person name="Goodwin L."/>
            <person name="Kyrpides N.C."/>
            <person name="Land M.L."/>
            <person name="Woyke T."/>
            <person name="Hutchins D.A."/>
            <person name="Hess W.R."/>
            <person name="Webb E.A."/>
        </authorList>
    </citation>
    <scope>NUCLEOTIDE SEQUENCE [LARGE SCALE GENOMIC DNA]</scope>
    <source>
        <strain>IMS101</strain>
    </source>
</reference>
<sequence length="239" mass="27313">MGGNQFRFKQFTIRQDRCAMKVGTDGTLLGAWVDVSGAEKILDIGTGTGLIALMLAQRSSQLKVDIDAVEIDINSSIQARENVERSRWSDRVKVENYSIQKYIDICQKRYDLIVSNPPFFENASKPVKKARTVARHTDFLSQADLLQAAVKLLSDTGKLAVIYPVEQAHNFQEKAEYLGLFCQRKLDVKPMPKIPTKRILMELSKKKLPLQKNTLTIEVKQYTYTPEFITLIKDFYLKY</sequence>